<keyword id="KW-0687">Ribonucleoprotein</keyword>
<keyword id="KW-0689">Ribosomal protein</keyword>
<keyword id="KW-0694">RNA-binding</keyword>
<keyword id="KW-0699">rRNA-binding</keyword>
<accession>Q730L3</accession>
<comment type="function">
    <text evidence="1">Binds directly to 16S ribosomal RNA.</text>
</comment>
<comment type="similarity">
    <text evidence="1">Belongs to the bacterial ribosomal protein bS20 family.</text>
</comment>
<feature type="chain" id="PRO_0000167911" description="Small ribosomal subunit protein bS20">
    <location>
        <begin position="1"/>
        <end position="85"/>
    </location>
</feature>
<feature type="region of interest" description="Disordered" evidence="2">
    <location>
        <begin position="1"/>
        <end position="25"/>
    </location>
</feature>
<reference key="1">
    <citation type="journal article" date="2004" name="Nucleic Acids Res.">
        <title>The genome sequence of Bacillus cereus ATCC 10987 reveals metabolic adaptations and a large plasmid related to Bacillus anthracis pXO1.</title>
        <authorList>
            <person name="Rasko D.A."/>
            <person name="Ravel J."/>
            <person name="Oekstad O.A."/>
            <person name="Helgason E."/>
            <person name="Cer R.Z."/>
            <person name="Jiang L."/>
            <person name="Shores K.A."/>
            <person name="Fouts D.E."/>
            <person name="Tourasse N.J."/>
            <person name="Angiuoli S.V."/>
            <person name="Kolonay J.F."/>
            <person name="Nelson W.C."/>
            <person name="Kolstoe A.-B."/>
            <person name="Fraser C.M."/>
            <person name="Read T.D."/>
        </authorList>
    </citation>
    <scope>NUCLEOTIDE SEQUENCE [LARGE SCALE GENOMIC DNA]</scope>
    <source>
        <strain>ATCC 10987 / NRS 248</strain>
    </source>
</reference>
<dbReference type="EMBL" id="AE017194">
    <property type="protein sequence ID" value="AAS43304.1"/>
    <property type="molecule type" value="Genomic_DNA"/>
</dbReference>
<dbReference type="SMR" id="Q730L3"/>
<dbReference type="KEGG" id="bca:BCE_4403"/>
<dbReference type="HOGENOM" id="CLU_160655_1_0_9"/>
<dbReference type="Proteomes" id="UP000002527">
    <property type="component" value="Chromosome"/>
</dbReference>
<dbReference type="GO" id="GO:0005829">
    <property type="term" value="C:cytosol"/>
    <property type="evidence" value="ECO:0007669"/>
    <property type="project" value="TreeGrafter"/>
</dbReference>
<dbReference type="GO" id="GO:0015935">
    <property type="term" value="C:small ribosomal subunit"/>
    <property type="evidence" value="ECO:0007669"/>
    <property type="project" value="TreeGrafter"/>
</dbReference>
<dbReference type="GO" id="GO:0070181">
    <property type="term" value="F:small ribosomal subunit rRNA binding"/>
    <property type="evidence" value="ECO:0007669"/>
    <property type="project" value="TreeGrafter"/>
</dbReference>
<dbReference type="GO" id="GO:0003735">
    <property type="term" value="F:structural constituent of ribosome"/>
    <property type="evidence" value="ECO:0007669"/>
    <property type="project" value="InterPro"/>
</dbReference>
<dbReference type="GO" id="GO:0006412">
    <property type="term" value="P:translation"/>
    <property type="evidence" value="ECO:0007669"/>
    <property type="project" value="UniProtKB-UniRule"/>
</dbReference>
<dbReference type="FunFam" id="1.20.58.110:FF:000001">
    <property type="entry name" value="30S ribosomal protein S20"/>
    <property type="match status" value="1"/>
</dbReference>
<dbReference type="Gene3D" id="1.20.58.110">
    <property type="entry name" value="Ribosomal protein S20"/>
    <property type="match status" value="1"/>
</dbReference>
<dbReference type="HAMAP" id="MF_00500">
    <property type="entry name" value="Ribosomal_bS20"/>
    <property type="match status" value="1"/>
</dbReference>
<dbReference type="InterPro" id="IPR002583">
    <property type="entry name" value="Ribosomal_bS20"/>
</dbReference>
<dbReference type="InterPro" id="IPR036510">
    <property type="entry name" value="Ribosomal_bS20_sf"/>
</dbReference>
<dbReference type="NCBIfam" id="TIGR00029">
    <property type="entry name" value="S20"/>
    <property type="match status" value="1"/>
</dbReference>
<dbReference type="PANTHER" id="PTHR33398">
    <property type="entry name" value="30S RIBOSOMAL PROTEIN S20"/>
    <property type="match status" value="1"/>
</dbReference>
<dbReference type="PANTHER" id="PTHR33398:SF1">
    <property type="entry name" value="SMALL RIBOSOMAL SUBUNIT PROTEIN BS20C"/>
    <property type="match status" value="1"/>
</dbReference>
<dbReference type="Pfam" id="PF01649">
    <property type="entry name" value="Ribosomal_S20p"/>
    <property type="match status" value="1"/>
</dbReference>
<dbReference type="SUPFAM" id="SSF46992">
    <property type="entry name" value="Ribosomal protein S20"/>
    <property type="match status" value="1"/>
</dbReference>
<evidence type="ECO:0000255" key="1">
    <source>
        <dbReference type="HAMAP-Rule" id="MF_00500"/>
    </source>
</evidence>
<evidence type="ECO:0000256" key="2">
    <source>
        <dbReference type="SAM" id="MobiDB-lite"/>
    </source>
</evidence>
<evidence type="ECO:0000305" key="3"/>
<name>RS20_BACC1</name>
<sequence length="85" mass="9342">MANIKSAIKRAKLSEERRAHNASIKSDMRSAVKTVEALVTNNDLENAKEAFKTASKKLDKAARKGLIHQNAAARQKSRLAKQVNA</sequence>
<gene>
    <name evidence="1" type="primary">rpsT</name>
    <name type="ordered locus">BCE_4403</name>
</gene>
<proteinExistence type="inferred from homology"/>
<organism>
    <name type="scientific">Bacillus cereus (strain ATCC 10987 / NRS 248)</name>
    <dbReference type="NCBI Taxonomy" id="222523"/>
    <lineage>
        <taxon>Bacteria</taxon>
        <taxon>Bacillati</taxon>
        <taxon>Bacillota</taxon>
        <taxon>Bacilli</taxon>
        <taxon>Bacillales</taxon>
        <taxon>Bacillaceae</taxon>
        <taxon>Bacillus</taxon>
        <taxon>Bacillus cereus group</taxon>
    </lineage>
</organism>
<protein>
    <recommendedName>
        <fullName evidence="1">Small ribosomal subunit protein bS20</fullName>
    </recommendedName>
    <alternativeName>
        <fullName evidence="3">30S ribosomal protein S20</fullName>
    </alternativeName>
</protein>